<organism>
    <name type="scientific">Borreliella burgdorferi (strain ATCC 35210 / DSM 4680 / CIP 102532 / B31)</name>
    <name type="common">Borrelia burgdorferi</name>
    <dbReference type="NCBI Taxonomy" id="224326"/>
    <lineage>
        <taxon>Bacteria</taxon>
        <taxon>Pseudomonadati</taxon>
        <taxon>Spirochaetota</taxon>
        <taxon>Spirochaetia</taxon>
        <taxon>Spirochaetales</taxon>
        <taxon>Borreliaceae</taxon>
        <taxon>Borreliella</taxon>
    </lineage>
</organism>
<feature type="chain" id="PRO_0000232692" description="Coenzyme A biosynthesis bifunctional protein CoaBC">
    <location>
        <begin position="1"/>
        <end position="390"/>
    </location>
</feature>
<feature type="region of interest" description="Phosphopantothenoylcysteine decarboxylase" evidence="1">
    <location>
        <begin position="1"/>
        <end position="188"/>
    </location>
</feature>
<feature type="region of interest" description="Phosphopantothenate--cysteine ligase" evidence="1">
    <location>
        <begin position="189"/>
        <end position="390"/>
    </location>
</feature>
<feature type="active site" description="Proton donor" evidence="1">
    <location>
        <position position="156"/>
    </location>
</feature>
<feature type="binding site" evidence="1">
    <location>
        <position position="277"/>
    </location>
    <ligand>
        <name>CTP</name>
        <dbReference type="ChEBI" id="CHEBI:37563"/>
    </ligand>
</feature>
<feature type="binding site" evidence="1">
    <location>
        <position position="287"/>
    </location>
    <ligand>
        <name>CTP</name>
        <dbReference type="ChEBI" id="CHEBI:37563"/>
    </ligand>
</feature>
<feature type="binding site" evidence="1">
    <location>
        <begin position="304"/>
        <end position="307"/>
    </location>
    <ligand>
        <name>CTP</name>
        <dbReference type="ChEBI" id="CHEBI:37563"/>
    </ligand>
</feature>
<feature type="binding site" evidence="1">
    <location>
        <position position="323"/>
    </location>
    <ligand>
        <name>CTP</name>
        <dbReference type="ChEBI" id="CHEBI:37563"/>
    </ligand>
</feature>
<feature type="binding site" evidence="1">
    <location>
        <position position="338"/>
    </location>
    <ligand>
        <name>CTP</name>
        <dbReference type="ChEBI" id="CHEBI:37563"/>
    </ligand>
</feature>
<feature type="binding site" evidence="1">
    <location>
        <position position="342"/>
    </location>
    <ligand>
        <name>CTP</name>
        <dbReference type="ChEBI" id="CHEBI:37563"/>
    </ligand>
</feature>
<sequence>MDKNKHILIGICGGIASYKSVYIVSSLVKLGYKVKVIMTQNATKFITPLTLETISKNKIITNLWDLDHNEVEHIKIAKWAHLILVIPATYNTISKIASGIADDALTTIISASTAPTYFAIAMNNIMYSNPILKENIKKLKTYNYKFIEPDKGFLACSSNALGRLKNEDKIIKIILNEFNQKDYLKNKKILITASRTEELIDPIRYFSNTSTGKMGFCLAQEAVKLGAQVTIITGPTNENDPEGVNIIKIKTAMEMYKEALKIYNKFEIIIGAAAVADFKPKHIFNSKIKKNKINRLYIKLVKNPDIIQHIGHNKLKNQIVIGFCAENSKNLIQKAKEKLKKKNLDFIIANELKYFGSKLNKVYIINKQSIKELPEMEKSEVAKEILKILY</sequence>
<protein>
    <recommendedName>
        <fullName evidence="1">Coenzyme A biosynthesis bifunctional protein CoaBC</fullName>
    </recommendedName>
    <alternativeName>
        <fullName evidence="1">DNA/pantothenate metabolism flavoprotein</fullName>
    </alternativeName>
    <alternativeName>
        <fullName evidence="1">Phosphopantothenoylcysteine synthetase/decarboxylase</fullName>
        <shortName evidence="1">PPCS-PPCDC</shortName>
    </alternativeName>
    <domain>
        <recommendedName>
            <fullName evidence="1">Phosphopantothenoylcysteine decarboxylase</fullName>
            <shortName evidence="1">PPC decarboxylase</shortName>
            <shortName evidence="1">PPC-DC</shortName>
            <ecNumber evidence="1">4.1.1.36</ecNumber>
        </recommendedName>
        <alternativeName>
            <fullName evidence="1">CoaC</fullName>
        </alternativeName>
    </domain>
    <domain>
        <recommendedName>
            <fullName evidence="1">Phosphopantothenate--cysteine ligase</fullName>
            <ecNumber evidence="1">6.3.2.5</ecNumber>
        </recommendedName>
        <alternativeName>
            <fullName evidence="1">CoaB</fullName>
        </alternativeName>
        <alternativeName>
            <fullName evidence="1">Phosphopantothenoylcysteine synthetase</fullName>
            <shortName evidence="1">PPC synthetase</shortName>
            <shortName evidence="1">PPC-S</shortName>
        </alternativeName>
    </domain>
</protein>
<name>COABC_BORBU</name>
<reference key="1">
    <citation type="journal article" date="1997" name="Nature">
        <title>Genomic sequence of a Lyme disease spirochaete, Borrelia burgdorferi.</title>
        <authorList>
            <person name="Fraser C.M."/>
            <person name="Casjens S."/>
            <person name="Huang W.M."/>
            <person name="Sutton G.G."/>
            <person name="Clayton R.A."/>
            <person name="Lathigra R."/>
            <person name="White O."/>
            <person name="Ketchum K.A."/>
            <person name="Dodson R.J."/>
            <person name="Hickey E.K."/>
            <person name="Gwinn M.L."/>
            <person name="Dougherty B.A."/>
            <person name="Tomb J.-F."/>
            <person name="Fleischmann R.D."/>
            <person name="Richardson D.L."/>
            <person name="Peterson J.D."/>
            <person name="Kerlavage A.R."/>
            <person name="Quackenbush J."/>
            <person name="Salzberg S.L."/>
            <person name="Hanson M."/>
            <person name="van Vugt R."/>
            <person name="Palmer N."/>
            <person name="Adams M.D."/>
            <person name="Gocayne J.D."/>
            <person name="Weidman J.F."/>
            <person name="Utterback T.R."/>
            <person name="Watthey L."/>
            <person name="McDonald L.A."/>
            <person name="Artiach P."/>
            <person name="Bowman C."/>
            <person name="Garland S.A."/>
            <person name="Fujii C."/>
            <person name="Cotton M.D."/>
            <person name="Horst K."/>
            <person name="Roberts K.M."/>
            <person name="Hatch B."/>
            <person name="Smith H.O."/>
            <person name="Venter J.C."/>
        </authorList>
    </citation>
    <scope>NUCLEOTIDE SEQUENCE [LARGE SCALE GENOMIC DNA]</scope>
    <source>
        <strain>ATCC 35210 / DSM 4680 / CIP 102532 / B31</strain>
    </source>
</reference>
<keyword id="KW-0210">Decarboxylase</keyword>
<keyword id="KW-0285">Flavoprotein</keyword>
<keyword id="KW-0288">FMN</keyword>
<keyword id="KW-0436">Ligase</keyword>
<keyword id="KW-0456">Lyase</keyword>
<keyword id="KW-0460">Magnesium</keyword>
<keyword id="KW-0479">Metal-binding</keyword>
<keyword id="KW-0511">Multifunctional enzyme</keyword>
<keyword id="KW-1185">Reference proteome</keyword>
<evidence type="ECO:0000255" key="1">
    <source>
        <dbReference type="HAMAP-Rule" id="MF_02225"/>
    </source>
</evidence>
<accession>O51752</accession>
<gene>
    <name evidence="1" type="primary">coaBC</name>
    <name type="synonym">dfp</name>
    <name type="ordered locus">BB_0812</name>
</gene>
<proteinExistence type="inferred from homology"/>
<comment type="function">
    <text evidence="1">Catalyzes two sequential steps in the biosynthesis of coenzyme A. In the first step cysteine is conjugated to 4'-phosphopantothenate to form 4-phosphopantothenoylcysteine. In the second step the latter compound is decarboxylated to form 4'-phosphopantotheine.</text>
</comment>
<comment type="catalytic activity">
    <reaction evidence="1">
        <text>N-[(R)-4-phosphopantothenoyl]-L-cysteine + H(+) = (R)-4'-phosphopantetheine + CO2</text>
        <dbReference type="Rhea" id="RHEA:16793"/>
        <dbReference type="ChEBI" id="CHEBI:15378"/>
        <dbReference type="ChEBI" id="CHEBI:16526"/>
        <dbReference type="ChEBI" id="CHEBI:59458"/>
        <dbReference type="ChEBI" id="CHEBI:61723"/>
        <dbReference type="EC" id="4.1.1.36"/>
    </reaction>
</comment>
<comment type="catalytic activity">
    <reaction evidence="1">
        <text>(R)-4'-phosphopantothenate + L-cysteine + CTP = N-[(R)-4-phosphopantothenoyl]-L-cysteine + CMP + diphosphate + H(+)</text>
        <dbReference type="Rhea" id="RHEA:19397"/>
        <dbReference type="ChEBI" id="CHEBI:10986"/>
        <dbReference type="ChEBI" id="CHEBI:15378"/>
        <dbReference type="ChEBI" id="CHEBI:33019"/>
        <dbReference type="ChEBI" id="CHEBI:35235"/>
        <dbReference type="ChEBI" id="CHEBI:37563"/>
        <dbReference type="ChEBI" id="CHEBI:59458"/>
        <dbReference type="ChEBI" id="CHEBI:60377"/>
        <dbReference type="EC" id="6.3.2.5"/>
    </reaction>
</comment>
<comment type="cofactor">
    <cofactor evidence="1">
        <name>Mg(2+)</name>
        <dbReference type="ChEBI" id="CHEBI:18420"/>
    </cofactor>
</comment>
<comment type="cofactor">
    <cofactor evidence="1">
        <name>FMN</name>
        <dbReference type="ChEBI" id="CHEBI:58210"/>
    </cofactor>
    <text evidence="1">Binds 1 FMN per subunit.</text>
</comment>
<comment type="pathway">
    <text evidence="1">Cofactor biosynthesis; coenzyme A biosynthesis; CoA from (R)-pantothenate: step 2/5.</text>
</comment>
<comment type="pathway">
    <text evidence="1">Cofactor biosynthesis; coenzyme A biosynthesis; CoA from (R)-pantothenate: step 3/5.</text>
</comment>
<comment type="similarity">
    <text evidence="1">In the N-terminal section; belongs to the HFCD (homo-oligomeric flavin containing Cys decarboxylase) superfamily.</text>
</comment>
<comment type="similarity">
    <text evidence="1">In the C-terminal section; belongs to the PPC synthetase family.</text>
</comment>
<dbReference type="EC" id="4.1.1.36" evidence="1"/>
<dbReference type="EC" id="6.3.2.5" evidence="1"/>
<dbReference type="EMBL" id="AE000783">
    <property type="protein sequence ID" value="AAC67145.1"/>
    <property type="molecule type" value="Genomic_DNA"/>
</dbReference>
<dbReference type="PIR" id="C70201">
    <property type="entry name" value="C70201"/>
</dbReference>
<dbReference type="RefSeq" id="NP_212946.1">
    <property type="nucleotide sequence ID" value="NC_001318.1"/>
</dbReference>
<dbReference type="RefSeq" id="WP_010889826.1">
    <property type="nucleotide sequence ID" value="NC_001318.1"/>
</dbReference>
<dbReference type="SMR" id="O51752"/>
<dbReference type="STRING" id="224326.BB_0812"/>
<dbReference type="PaxDb" id="224326-BB_0812"/>
<dbReference type="EnsemblBacteria" id="AAC67145">
    <property type="protein sequence ID" value="AAC67145"/>
    <property type="gene ID" value="BB_0812"/>
</dbReference>
<dbReference type="KEGG" id="bbu:BB_0812"/>
<dbReference type="PATRIC" id="fig|224326.49.peg.1204"/>
<dbReference type="HOGENOM" id="CLU_033319_0_1_12"/>
<dbReference type="OrthoDB" id="9802554at2"/>
<dbReference type="UniPathway" id="UPA00241">
    <property type="reaction ID" value="UER00353"/>
</dbReference>
<dbReference type="UniPathway" id="UPA00241">
    <property type="reaction ID" value="UER00354"/>
</dbReference>
<dbReference type="Proteomes" id="UP000001807">
    <property type="component" value="Chromosome"/>
</dbReference>
<dbReference type="GO" id="GO:0071513">
    <property type="term" value="C:phosphopantothenoylcysteine decarboxylase complex"/>
    <property type="evidence" value="ECO:0007669"/>
    <property type="project" value="TreeGrafter"/>
</dbReference>
<dbReference type="GO" id="GO:0010181">
    <property type="term" value="F:FMN binding"/>
    <property type="evidence" value="ECO:0007669"/>
    <property type="project" value="UniProtKB-UniRule"/>
</dbReference>
<dbReference type="GO" id="GO:0046872">
    <property type="term" value="F:metal ion binding"/>
    <property type="evidence" value="ECO:0007669"/>
    <property type="project" value="UniProtKB-KW"/>
</dbReference>
<dbReference type="GO" id="GO:0004632">
    <property type="term" value="F:phosphopantothenate--cysteine ligase activity"/>
    <property type="evidence" value="ECO:0007669"/>
    <property type="project" value="UniProtKB-UniRule"/>
</dbReference>
<dbReference type="GO" id="GO:0004633">
    <property type="term" value="F:phosphopantothenoylcysteine decarboxylase activity"/>
    <property type="evidence" value="ECO:0007669"/>
    <property type="project" value="UniProtKB-UniRule"/>
</dbReference>
<dbReference type="GO" id="GO:0015937">
    <property type="term" value="P:coenzyme A biosynthetic process"/>
    <property type="evidence" value="ECO:0007669"/>
    <property type="project" value="UniProtKB-UniRule"/>
</dbReference>
<dbReference type="GO" id="GO:0015941">
    <property type="term" value="P:pantothenate catabolic process"/>
    <property type="evidence" value="ECO:0007669"/>
    <property type="project" value="InterPro"/>
</dbReference>
<dbReference type="Gene3D" id="3.40.50.10300">
    <property type="entry name" value="CoaB-like"/>
    <property type="match status" value="1"/>
</dbReference>
<dbReference type="Gene3D" id="3.40.50.1950">
    <property type="entry name" value="Flavin prenyltransferase-like"/>
    <property type="match status" value="1"/>
</dbReference>
<dbReference type="HAMAP" id="MF_02225">
    <property type="entry name" value="CoaBC"/>
    <property type="match status" value="1"/>
</dbReference>
<dbReference type="InterPro" id="IPR035929">
    <property type="entry name" value="CoaB-like_sf"/>
</dbReference>
<dbReference type="InterPro" id="IPR005252">
    <property type="entry name" value="CoaBC"/>
</dbReference>
<dbReference type="InterPro" id="IPR007085">
    <property type="entry name" value="DNA/pantothenate-metab_flavo_C"/>
</dbReference>
<dbReference type="InterPro" id="IPR036551">
    <property type="entry name" value="Flavin_trans-like"/>
</dbReference>
<dbReference type="InterPro" id="IPR003382">
    <property type="entry name" value="Flavoprotein"/>
</dbReference>
<dbReference type="NCBIfam" id="TIGR00521">
    <property type="entry name" value="coaBC_dfp"/>
    <property type="match status" value="1"/>
</dbReference>
<dbReference type="PANTHER" id="PTHR14359">
    <property type="entry name" value="HOMO-OLIGOMERIC FLAVIN CONTAINING CYS DECARBOXYLASE FAMILY"/>
    <property type="match status" value="1"/>
</dbReference>
<dbReference type="PANTHER" id="PTHR14359:SF6">
    <property type="entry name" value="PHOSPHOPANTOTHENOYLCYSTEINE DECARBOXYLASE"/>
    <property type="match status" value="1"/>
</dbReference>
<dbReference type="Pfam" id="PF04127">
    <property type="entry name" value="DFP"/>
    <property type="match status" value="1"/>
</dbReference>
<dbReference type="Pfam" id="PF02441">
    <property type="entry name" value="Flavoprotein"/>
    <property type="match status" value="1"/>
</dbReference>
<dbReference type="SUPFAM" id="SSF102645">
    <property type="entry name" value="CoaB-like"/>
    <property type="match status" value="1"/>
</dbReference>
<dbReference type="SUPFAM" id="SSF52507">
    <property type="entry name" value="Homo-oligomeric flavin-containing Cys decarboxylases, HFCD"/>
    <property type="match status" value="1"/>
</dbReference>